<accession>Q6DRL8</accession>
<accession>Q568S3</accession>
<proteinExistence type="evidence at transcript level"/>
<feature type="chain" id="PRO_0000304768" description="Mediator of RNA polymerase II transcription subunit 19-B">
    <location>
        <begin position="1"/>
        <end position="240"/>
    </location>
</feature>
<feature type="region of interest" description="Disordered" evidence="2">
    <location>
        <begin position="1"/>
        <end position="29"/>
    </location>
</feature>
<feature type="region of interest" description="Disordered" evidence="2">
    <location>
        <begin position="168"/>
        <end position="240"/>
    </location>
</feature>
<feature type="compositionally biased region" description="Polar residues" evidence="2">
    <location>
        <begin position="1"/>
        <end position="14"/>
    </location>
</feature>
<feature type="compositionally biased region" description="Basic residues" evidence="2">
    <location>
        <begin position="168"/>
        <end position="180"/>
    </location>
</feature>
<feature type="compositionally biased region" description="Basic residues" evidence="2">
    <location>
        <begin position="209"/>
        <end position="221"/>
    </location>
</feature>
<feature type="sequence conflict" description="In Ref. 2; AAH92743." evidence="3" ref="2">
    <original>L</original>
    <variation>S</variation>
    <location>
        <position position="151"/>
    </location>
</feature>
<comment type="function">
    <text evidence="1">Component of the Mediator complex, a coactivator involved in the regulated transcription of nearly all RNA polymerase II-dependent genes. Mediator functions as a bridge to convey information from gene-specific regulatory proteins to the basal RNA polymerase II transcription machinery. Mediator is recruited to promoters by direct interactions with regulatory proteins and serves as a scaffold for the assembly of a functional preinitiation complex with RNA polymerase II and the general transcription factors (By similarity).</text>
</comment>
<comment type="subunit">
    <text evidence="1">Component of the Mediator complex.</text>
</comment>
<comment type="subcellular location">
    <subcellularLocation>
        <location evidence="3">Nucleus</location>
    </subcellularLocation>
</comment>
<comment type="similarity">
    <text evidence="3">Belongs to the Mediator complex subunit 19 family.</text>
</comment>
<dbReference type="EMBL" id="AY648741">
    <property type="protein sequence ID" value="AAT68059.1"/>
    <property type="molecule type" value="mRNA"/>
</dbReference>
<dbReference type="EMBL" id="BC092743">
    <property type="protein sequence ID" value="AAH92743.1"/>
    <property type="molecule type" value="mRNA"/>
</dbReference>
<dbReference type="RefSeq" id="NP_001003416.2">
    <property type="nucleotide sequence ID" value="NM_001003416.2"/>
</dbReference>
<dbReference type="SMR" id="Q6DRL8"/>
<dbReference type="FunCoup" id="Q6DRL8">
    <property type="interactions" value="1115"/>
</dbReference>
<dbReference type="STRING" id="7955.ENSDARP00000116331"/>
<dbReference type="PaxDb" id="7955-ENSDARP00000116331"/>
<dbReference type="Ensembl" id="ENSDART00000003022">
    <property type="protein sequence ID" value="ENSDARP00000016407"/>
    <property type="gene ID" value="ENSDARG00000009472"/>
</dbReference>
<dbReference type="GeneID" id="445021"/>
<dbReference type="KEGG" id="dre:445021"/>
<dbReference type="AGR" id="ZFIN:ZDB-GENE-040727-4"/>
<dbReference type="CTD" id="445021"/>
<dbReference type="ZFIN" id="ZDB-GENE-040727-4">
    <property type="gene designation" value="med19b"/>
</dbReference>
<dbReference type="eggNOG" id="KOG4043">
    <property type="taxonomic scope" value="Eukaryota"/>
</dbReference>
<dbReference type="HOGENOM" id="CLU_098332_0_0_1"/>
<dbReference type="InParanoid" id="Q6DRL8"/>
<dbReference type="OrthoDB" id="10044050at2759"/>
<dbReference type="PhylomeDB" id="Q6DRL8"/>
<dbReference type="PRO" id="PR:Q6DRL8"/>
<dbReference type="Proteomes" id="UP000000437">
    <property type="component" value="Chromosome 1"/>
</dbReference>
<dbReference type="Bgee" id="ENSDARG00000009472">
    <property type="expression patterns" value="Expressed in mature ovarian follicle and 21 other cell types or tissues"/>
</dbReference>
<dbReference type="ExpressionAtlas" id="Q6DRL8">
    <property type="expression patterns" value="baseline"/>
</dbReference>
<dbReference type="GO" id="GO:0016592">
    <property type="term" value="C:mediator complex"/>
    <property type="evidence" value="ECO:0000318"/>
    <property type="project" value="GO_Central"/>
</dbReference>
<dbReference type="GO" id="GO:0003712">
    <property type="term" value="F:transcription coregulator activity"/>
    <property type="evidence" value="ECO:0007669"/>
    <property type="project" value="InterPro"/>
</dbReference>
<dbReference type="GO" id="GO:0045944">
    <property type="term" value="P:positive regulation of transcription by RNA polymerase II"/>
    <property type="evidence" value="ECO:0000318"/>
    <property type="project" value="GO_Central"/>
</dbReference>
<dbReference type="InterPro" id="IPR019403">
    <property type="entry name" value="Mediator_Med19_met"/>
</dbReference>
<dbReference type="PANTHER" id="PTHR22536">
    <property type="entry name" value="LUNG CANCER METASTASIS-RELATED LCMR1 PROTEIN"/>
    <property type="match status" value="1"/>
</dbReference>
<dbReference type="PANTHER" id="PTHR22536:SF1">
    <property type="entry name" value="MEDIATOR OF RNA POLYMERASE II TRANSCRIPTION SUBUNIT 19"/>
    <property type="match status" value="1"/>
</dbReference>
<dbReference type="Pfam" id="PF10278">
    <property type="entry name" value="Med19"/>
    <property type="match status" value="1"/>
</dbReference>
<name>MD19B_DANRE</name>
<organism>
    <name type="scientific">Danio rerio</name>
    <name type="common">Zebrafish</name>
    <name type="synonym">Brachydanio rerio</name>
    <dbReference type="NCBI Taxonomy" id="7955"/>
    <lineage>
        <taxon>Eukaryota</taxon>
        <taxon>Metazoa</taxon>
        <taxon>Chordata</taxon>
        <taxon>Craniata</taxon>
        <taxon>Vertebrata</taxon>
        <taxon>Euteleostomi</taxon>
        <taxon>Actinopterygii</taxon>
        <taxon>Neopterygii</taxon>
        <taxon>Teleostei</taxon>
        <taxon>Ostariophysi</taxon>
        <taxon>Cypriniformes</taxon>
        <taxon>Danionidae</taxon>
        <taxon>Danioninae</taxon>
        <taxon>Danio</taxon>
    </lineage>
</organism>
<keyword id="KW-0010">Activator</keyword>
<keyword id="KW-0539">Nucleus</keyword>
<keyword id="KW-1185">Reference proteome</keyword>
<keyword id="KW-0804">Transcription</keyword>
<keyword id="KW-0805">Transcription regulation</keyword>
<reference key="1">
    <citation type="journal article" date="2004" name="Proc. Natl. Acad. Sci. U.S.A.">
        <title>Identification of 315 genes essential for early zebrafish development.</title>
        <authorList>
            <person name="Amsterdam A."/>
            <person name="Nissen R.M."/>
            <person name="Sun Z."/>
            <person name="Swindell E.C."/>
            <person name="Farrington S."/>
            <person name="Hopkins N."/>
        </authorList>
    </citation>
    <scope>NUCLEOTIDE SEQUENCE [LARGE SCALE MRNA]</scope>
</reference>
<reference key="2">
    <citation type="submission" date="2005-04" db="EMBL/GenBank/DDBJ databases">
        <authorList>
            <consortium name="NIH - Zebrafish Gene Collection (ZGC) project"/>
        </authorList>
    </citation>
    <scope>NUCLEOTIDE SEQUENCE [LARGE SCALE MRNA]</scope>
    <source>
        <strain>AB</strain>
        <tissue>Embryo</tissue>
    </source>
</reference>
<sequence>MTEIFSSLYGQPDSQGPAGPSALGFGSGKPQVPQNMGPMCFPHQMMEEGAPVRKPAAMNEPFYLLRELPMENELTGHTNLITHYNLEHAYNKFCGKKVKEKLSNFLPELPGMIDSPGIQDNSSLRSLIEKPPVCNNSFSPLTGAMLTGFRLHTGPLPEQYRLMHIQPPKKKNKHKHKHHRPQDPLPPETPSDSDHKKKKKKKDDDPDRKKKKKDKKKKKNRHSPDHPGMTGAQPSTSSLR</sequence>
<gene>
    <name type="primary">med19b</name>
    <name type="synonym">med19</name>
    <name type="ORF">zgc:110121</name>
</gene>
<evidence type="ECO:0000250" key="1"/>
<evidence type="ECO:0000256" key="2">
    <source>
        <dbReference type="SAM" id="MobiDB-lite"/>
    </source>
</evidence>
<evidence type="ECO:0000305" key="3"/>
<protein>
    <recommendedName>
        <fullName>Mediator of RNA polymerase II transcription subunit 19-B</fullName>
    </recommendedName>
    <alternativeName>
        <fullName>Mediator complex subunit 19-B</fullName>
    </alternativeName>
</protein>